<proteinExistence type="inferred from homology"/>
<name>LOLA_FRATO</name>
<feature type="signal peptide" evidence="1">
    <location>
        <begin position="1"/>
        <end position="19"/>
    </location>
</feature>
<feature type="chain" id="PRO_1000071827" description="Outer-membrane lipoprotein carrier protein">
    <location>
        <begin position="20"/>
        <end position="205"/>
    </location>
</feature>
<reference key="1">
    <citation type="journal article" date="2006" name="J. Bacteriol.">
        <title>Chromosome rearrangement and diversification of Francisella tularensis revealed by the type B (OSU18) genome sequence.</title>
        <authorList>
            <person name="Petrosino J.F."/>
            <person name="Xiang Q."/>
            <person name="Karpathy S.E."/>
            <person name="Jiang H."/>
            <person name="Yerrapragada S."/>
            <person name="Liu Y."/>
            <person name="Gioia J."/>
            <person name="Hemphill L."/>
            <person name="Gonzalez A."/>
            <person name="Raghavan T.M."/>
            <person name="Uzman A."/>
            <person name="Fox G.E."/>
            <person name="Highlander S."/>
            <person name="Reichard M."/>
            <person name="Morton R.J."/>
            <person name="Clinkenbeard K.D."/>
            <person name="Weinstock G.M."/>
        </authorList>
    </citation>
    <scope>NUCLEOTIDE SEQUENCE [LARGE SCALE GENOMIC DNA]</scope>
    <source>
        <strain>OSU18</strain>
    </source>
</reference>
<comment type="function">
    <text evidence="1">Participates in the translocation of lipoproteins from the inner membrane to the outer membrane. Only forms a complex with a lipoprotein if the residue after the N-terminal Cys is not an aspartate (The Asp acts as a targeting signal to indicate that the lipoprotein should stay in the inner membrane).</text>
</comment>
<comment type="subunit">
    <text evidence="1">Monomer.</text>
</comment>
<comment type="subcellular location">
    <subcellularLocation>
        <location evidence="1">Periplasm</location>
    </subcellularLocation>
</comment>
<comment type="similarity">
    <text evidence="1">Belongs to the LolA family.</text>
</comment>
<evidence type="ECO:0000255" key="1">
    <source>
        <dbReference type="HAMAP-Rule" id="MF_00240"/>
    </source>
</evidence>
<sequence length="205" mass="23436">MKKIIICFIFVFSINVSFADATSELIDKIKNIHSMTANFNQKLIDGQTNNNLNSKGNMSLKKPQYFKWITTSPNNQEIVSNGTKLWIYDGDLDQLIIKKVSNDIAQFPYLILLSKNTNNINKLFTVTAQDNNSYILKPKNDQMIDSIKIKFTPNNQLEYLEISTSLNQFTKIEFNNVKTDVDISNTSFDFKAPQNTDIIDETKSA</sequence>
<protein>
    <recommendedName>
        <fullName evidence="1">Outer-membrane lipoprotein carrier protein</fullName>
    </recommendedName>
</protein>
<gene>
    <name evidence="1" type="primary">lolA</name>
    <name type="ordered locus">FTH_1643</name>
</gene>
<accession>Q0BKG3</accession>
<keyword id="KW-0143">Chaperone</keyword>
<keyword id="KW-0574">Periplasm</keyword>
<keyword id="KW-0653">Protein transport</keyword>
<keyword id="KW-0732">Signal</keyword>
<keyword id="KW-0813">Transport</keyword>
<organism>
    <name type="scientific">Francisella tularensis subsp. holarctica (strain OSU18)</name>
    <dbReference type="NCBI Taxonomy" id="393011"/>
    <lineage>
        <taxon>Bacteria</taxon>
        <taxon>Pseudomonadati</taxon>
        <taxon>Pseudomonadota</taxon>
        <taxon>Gammaproteobacteria</taxon>
        <taxon>Thiotrichales</taxon>
        <taxon>Francisellaceae</taxon>
        <taxon>Francisella</taxon>
    </lineage>
</organism>
<dbReference type="EMBL" id="CP000437">
    <property type="protein sequence ID" value="ABI83421.1"/>
    <property type="molecule type" value="Genomic_DNA"/>
</dbReference>
<dbReference type="RefSeq" id="WP_003017161.1">
    <property type="nucleotide sequence ID" value="NC_017463.1"/>
</dbReference>
<dbReference type="SMR" id="Q0BKG3"/>
<dbReference type="KEGG" id="fth:FTH_1643"/>
<dbReference type="GO" id="GO:0030288">
    <property type="term" value="C:outer membrane-bounded periplasmic space"/>
    <property type="evidence" value="ECO:0007669"/>
    <property type="project" value="TreeGrafter"/>
</dbReference>
<dbReference type="GO" id="GO:0044874">
    <property type="term" value="P:lipoprotein localization to outer membrane"/>
    <property type="evidence" value="ECO:0007669"/>
    <property type="project" value="UniProtKB-UniRule"/>
</dbReference>
<dbReference type="GO" id="GO:0042953">
    <property type="term" value="P:lipoprotein transport"/>
    <property type="evidence" value="ECO:0007669"/>
    <property type="project" value="InterPro"/>
</dbReference>
<dbReference type="CDD" id="cd16325">
    <property type="entry name" value="LolA"/>
    <property type="match status" value="1"/>
</dbReference>
<dbReference type="Gene3D" id="2.50.20.10">
    <property type="entry name" value="Lipoprotein localisation LolA/LolB/LppX"/>
    <property type="match status" value="1"/>
</dbReference>
<dbReference type="HAMAP" id="MF_00240">
    <property type="entry name" value="LolA"/>
    <property type="match status" value="1"/>
</dbReference>
<dbReference type="InterPro" id="IPR029046">
    <property type="entry name" value="LolA/LolB/LppX"/>
</dbReference>
<dbReference type="InterPro" id="IPR004564">
    <property type="entry name" value="OM_lipoprot_carrier_LolA-like"/>
</dbReference>
<dbReference type="InterPro" id="IPR018323">
    <property type="entry name" value="OM_lipoprot_carrier_LolA_Pbac"/>
</dbReference>
<dbReference type="NCBIfam" id="TIGR00547">
    <property type="entry name" value="lolA"/>
    <property type="match status" value="1"/>
</dbReference>
<dbReference type="PANTHER" id="PTHR35869">
    <property type="entry name" value="OUTER-MEMBRANE LIPOPROTEIN CARRIER PROTEIN"/>
    <property type="match status" value="1"/>
</dbReference>
<dbReference type="PANTHER" id="PTHR35869:SF1">
    <property type="entry name" value="OUTER-MEMBRANE LIPOPROTEIN CARRIER PROTEIN"/>
    <property type="match status" value="1"/>
</dbReference>
<dbReference type="Pfam" id="PF03548">
    <property type="entry name" value="LolA"/>
    <property type="match status" value="1"/>
</dbReference>
<dbReference type="SUPFAM" id="SSF89392">
    <property type="entry name" value="Prokaryotic lipoproteins and lipoprotein localization factors"/>
    <property type="match status" value="1"/>
</dbReference>